<reference key="1">
    <citation type="journal article" date="2006" name="Nature">
        <title>DNA sequence of human chromosome 17 and analysis of rearrangement in the human lineage.</title>
        <authorList>
            <person name="Zody M.C."/>
            <person name="Garber M."/>
            <person name="Adams D.J."/>
            <person name="Sharpe T."/>
            <person name="Harrow J."/>
            <person name="Lupski J.R."/>
            <person name="Nicholson C."/>
            <person name="Searle S.M."/>
            <person name="Wilming L."/>
            <person name="Young S.K."/>
            <person name="Abouelleil A."/>
            <person name="Allen N.R."/>
            <person name="Bi W."/>
            <person name="Bloom T."/>
            <person name="Borowsky M.L."/>
            <person name="Bugalter B.E."/>
            <person name="Butler J."/>
            <person name="Chang J.L."/>
            <person name="Chen C.-K."/>
            <person name="Cook A."/>
            <person name="Corum B."/>
            <person name="Cuomo C.A."/>
            <person name="de Jong P.J."/>
            <person name="DeCaprio D."/>
            <person name="Dewar K."/>
            <person name="FitzGerald M."/>
            <person name="Gilbert J."/>
            <person name="Gibson R."/>
            <person name="Gnerre S."/>
            <person name="Goldstein S."/>
            <person name="Grafham D.V."/>
            <person name="Grocock R."/>
            <person name="Hafez N."/>
            <person name="Hagopian D.S."/>
            <person name="Hart E."/>
            <person name="Norman C.H."/>
            <person name="Humphray S."/>
            <person name="Jaffe D.B."/>
            <person name="Jones M."/>
            <person name="Kamal M."/>
            <person name="Khodiyar V.K."/>
            <person name="LaButti K."/>
            <person name="Laird G."/>
            <person name="Lehoczky J."/>
            <person name="Liu X."/>
            <person name="Lokyitsang T."/>
            <person name="Loveland J."/>
            <person name="Lui A."/>
            <person name="Macdonald P."/>
            <person name="Major J.E."/>
            <person name="Matthews L."/>
            <person name="Mauceli E."/>
            <person name="McCarroll S.A."/>
            <person name="Mihalev A.H."/>
            <person name="Mudge J."/>
            <person name="Nguyen C."/>
            <person name="Nicol R."/>
            <person name="O'Leary S.B."/>
            <person name="Osoegawa K."/>
            <person name="Schwartz D.C."/>
            <person name="Shaw-Smith C."/>
            <person name="Stankiewicz P."/>
            <person name="Steward C."/>
            <person name="Swarbreck D."/>
            <person name="Venkataraman V."/>
            <person name="Whittaker C.A."/>
            <person name="Yang X."/>
            <person name="Zimmer A.R."/>
            <person name="Bradley A."/>
            <person name="Hubbard T."/>
            <person name="Birren B.W."/>
            <person name="Rogers J."/>
            <person name="Lander E.S."/>
            <person name="Nusbaum C."/>
        </authorList>
    </citation>
    <scope>NUCLEOTIDE SEQUENCE [LARGE SCALE GENOMIC DNA]</scope>
</reference>
<reference key="2">
    <citation type="submission" date="2005-06" db="EMBL/GenBank/DDBJ databases">
        <authorList>
            <person name="Mural R.J."/>
            <person name="Istrail S."/>
            <person name="Sutton G.G."/>
            <person name="Florea L."/>
            <person name="Halpern A.L."/>
            <person name="Mobarry C.M."/>
            <person name="Lippert R."/>
            <person name="Walenz B."/>
            <person name="Shatkay H."/>
            <person name="Dew I."/>
            <person name="Miller J.R."/>
            <person name="Flanigan M.J."/>
            <person name="Edwards N.J."/>
            <person name="Bolanos R."/>
            <person name="Fasulo D."/>
            <person name="Halldorsson B.V."/>
            <person name="Hannenhalli S."/>
            <person name="Turner R."/>
            <person name="Yooseph S."/>
            <person name="Lu F."/>
            <person name="Nusskern D.R."/>
            <person name="Shue B.C."/>
            <person name="Zheng X.H."/>
            <person name="Zhong F."/>
            <person name="Delcher A.L."/>
            <person name="Huson D.H."/>
            <person name="Kravitz S.A."/>
            <person name="Mouchard L."/>
            <person name="Reinert K."/>
            <person name="Remington K.A."/>
            <person name="Clark A.G."/>
            <person name="Waterman M.S."/>
            <person name="Eichler E.E."/>
            <person name="Adams M.D."/>
            <person name="Hunkapiller M.W."/>
            <person name="Myers E.W."/>
            <person name="Venter J.C."/>
        </authorList>
    </citation>
    <scope>NUCLEOTIDE SEQUENCE [LARGE SCALE GENOMIC DNA]</scope>
</reference>
<reference key="3">
    <citation type="journal article" date="2000" name="DNA Res.">
        <title>Prediction of the coding sequences of unidentified human genes. XVII. The complete sequences of 100 new cDNA clones from brain which code for large proteins in vitro.</title>
        <authorList>
            <person name="Nagase T."/>
            <person name="Kikuno R."/>
            <person name="Ishikawa K."/>
            <person name="Hirosawa M."/>
            <person name="Ohara O."/>
        </authorList>
    </citation>
    <scope>NUCLEOTIDE SEQUENCE [LARGE SCALE MRNA] OF 745-2465</scope>
    <scope>VARIANTS ALA-1168 AND ALA-1678</scope>
    <source>
        <tissue>Brain</tissue>
    </source>
</reference>
<reference key="4">
    <citation type="journal article" date="2004" name="Genome Res.">
        <title>The status, quality, and expansion of the NIH full-length cDNA project: the Mammalian Gene Collection (MGC).</title>
        <authorList>
            <consortium name="The MGC Project Team"/>
        </authorList>
    </citation>
    <scope>NUCLEOTIDE SEQUENCE [LARGE SCALE MRNA] OF 2451-2639</scope>
    <source>
        <tissue>Pancreas</tissue>
    </source>
</reference>
<reference key="5">
    <citation type="journal article" date="2007" name="Science">
        <title>ATM and ATR substrate analysis reveals extensive protein networks responsive to DNA damage.</title>
        <authorList>
            <person name="Matsuoka S."/>
            <person name="Ballif B.A."/>
            <person name="Smogorzewska A."/>
            <person name="McDonald E.R. III"/>
            <person name="Hurov K.E."/>
            <person name="Luo J."/>
            <person name="Bakalarski C.E."/>
            <person name="Zhao Z."/>
            <person name="Solimini N."/>
            <person name="Lerenthal Y."/>
            <person name="Shiloh Y."/>
            <person name="Gygi S.P."/>
            <person name="Elledge S.J."/>
        </authorList>
    </citation>
    <scope>IDENTIFICATION BY MASS SPECTROMETRY [LARGE SCALE ANALYSIS]</scope>
    <source>
        <tissue>Embryonic kidney</tissue>
    </source>
</reference>
<reference key="6">
    <citation type="journal article" date="2009" name="Science">
        <title>Lysine acetylation targets protein complexes and co-regulates major cellular functions.</title>
        <authorList>
            <person name="Choudhary C."/>
            <person name="Kumar C."/>
            <person name="Gnad F."/>
            <person name="Nielsen M.L."/>
            <person name="Rehman M."/>
            <person name="Walther T.C."/>
            <person name="Olsen J.V."/>
            <person name="Mann M."/>
        </authorList>
    </citation>
    <scope>ACETYLATION [LARGE SCALE ANALYSIS] AT LYS-222</scope>
    <scope>IDENTIFICATION BY MASS SPECTROMETRY [LARGE SCALE ANALYSIS]</scope>
</reference>
<reference key="7">
    <citation type="journal article" date="2013" name="J. Proteome Res.">
        <title>Toward a comprehensive characterization of a human cancer cell phosphoproteome.</title>
        <authorList>
            <person name="Zhou H."/>
            <person name="Di Palma S."/>
            <person name="Preisinger C."/>
            <person name="Peng M."/>
            <person name="Polat A.N."/>
            <person name="Heck A.J."/>
            <person name="Mohammed S."/>
        </authorList>
    </citation>
    <scope>PHOSPHORYLATION [LARGE SCALE ANALYSIS] AT SER-2274</scope>
    <scope>IDENTIFICATION BY MASS SPECTROMETRY [LARGE SCALE ANALYSIS]</scope>
    <source>
        <tissue>Cervix carcinoma</tissue>
    </source>
</reference>
<gene>
    <name evidence="7" type="primary">BAHCC1</name>
    <name type="synonym">BAHD2</name>
    <name evidence="5" type="synonym">KIAA1447</name>
</gene>
<organism>
    <name type="scientific">Homo sapiens</name>
    <name type="common">Human</name>
    <dbReference type="NCBI Taxonomy" id="9606"/>
    <lineage>
        <taxon>Eukaryota</taxon>
        <taxon>Metazoa</taxon>
        <taxon>Chordata</taxon>
        <taxon>Craniata</taxon>
        <taxon>Vertebrata</taxon>
        <taxon>Euteleostomi</taxon>
        <taxon>Mammalia</taxon>
        <taxon>Eutheria</taxon>
        <taxon>Euarchontoglires</taxon>
        <taxon>Primates</taxon>
        <taxon>Haplorrhini</taxon>
        <taxon>Catarrhini</taxon>
        <taxon>Hominidae</taxon>
        <taxon>Homo</taxon>
    </lineage>
</organism>
<keyword id="KW-0007">Acetylation</keyword>
<keyword id="KW-0175">Coiled coil</keyword>
<keyword id="KW-0597">Phosphoprotein</keyword>
<keyword id="KW-1267">Proteomics identification</keyword>
<keyword id="KW-1185">Reference proteome</keyword>
<name>BAHC1_HUMAN</name>
<proteinExistence type="evidence at protein level"/>
<accession>Q9P281</accession>
<accession>A0A075B747</accession>
<accession>Q5U629</accession>
<protein>
    <recommendedName>
        <fullName evidence="6">BAH and coiled-coil domain-containing protein 1</fullName>
    </recommendedName>
    <alternativeName>
        <fullName>Bromo adjacent homology domain-containing protein 2</fullName>
        <shortName>BAH domain-containing protein 2</shortName>
    </alternativeName>
</protein>
<feature type="chain" id="PRO_0000312118" description="BAH and coiled-coil domain-containing protein 1">
    <location>
        <begin position="1"/>
        <end position="2639"/>
    </location>
</feature>
<feature type="domain" description="BAH" evidence="2">
    <location>
        <begin position="2513"/>
        <end position="2633"/>
    </location>
</feature>
<feature type="region of interest" description="Disordered" evidence="3">
    <location>
        <begin position="23"/>
        <end position="49"/>
    </location>
</feature>
<feature type="region of interest" description="Disordered" evidence="3">
    <location>
        <begin position="84"/>
        <end position="107"/>
    </location>
</feature>
<feature type="region of interest" description="Disordered" evidence="3">
    <location>
        <begin position="188"/>
        <end position="249"/>
    </location>
</feature>
<feature type="region of interest" description="Disordered" evidence="3">
    <location>
        <begin position="669"/>
        <end position="702"/>
    </location>
</feature>
<feature type="region of interest" description="Disordered" evidence="3">
    <location>
        <begin position="716"/>
        <end position="746"/>
    </location>
</feature>
<feature type="region of interest" description="Disordered" evidence="3">
    <location>
        <begin position="939"/>
        <end position="1047"/>
    </location>
</feature>
<feature type="region of interest" description="Disordered" evidence="3">
    <location>
        <begin position="1104"/>
        <end position="1331"/>
    </location>
</feature>
<feature type="region of interest" description="Disordered" evidence="3">
    <location>
        <begin position="1457"/>
        <end position="1513"/>
    </location>
</feature>
<feature type="region of interest" description="Disordered" evidence="3">
    <location>
        <begin position="1582"/>
        <end position="1666"/>
    </location>
</feature>
<feature type="region of interest" description="Disordered" evidence="3">
    <location>
        <begin position="1722"/>
        <end position="1776"/>
    </location>
</feature>
<feature type="region of interest" description="Disordered" evidence="3">
    <location>
        <begin position="1868"/>
        <end position="1893"/>
    </location>
</feature>
<feature type="region of interest" description="Disordered" evidence="3">
    <location>
        <begin position="2057"/>
        <end position="2119"/>
    </location>
</feature>
<feature type="region of interest" description="Disordered" evidence="3">
    <location>
        <begin position="2317"/>
        <end position="2336"/>
    </location>
</feature>
<feature type="region of interest" description="Disordered" evidence="3">
    <location>
        <begin position="2348"/>
        <end position="2383"/>
    </location>
</feature>
<feature type="region of interest" description="Disordered" evidence="3">
    <location>
        <begin position="2432"/>
        <end position="2472"/>
    </location>
</feature>
<feature type="coiled-coil region" evidence="1">
    <location>
        <begin position="1439"/>
        <end position="1473"/>
    </location>
</feature>
<feature type="compositionally biased region" description="Low complexity" evidence="3">
    <location>
        <begin position="24"/>
        <end position="41"/>
    </location>
</feature>
<feature type="compositionally biased region" description="Low complexity" evidence="3">
    <location>
        <begin position="84"/>
        <end position="98"/>
    </location>
</feature>
<feature type="compositionally biased region" description="Basic and acidic residues" evidence="3">
    <location>
        <begin position="211"/>
        <end position="247"/>
    </location>
</feature>
<feature type="compositionally biased region" description="Basic and acidic residues" evidence="3">
    <location>
        <begin position="679"/>
        <end position="698"/>
    </location>
</feature>
<feature type="compositionally biased region" description="Basic and acidic residues" evidence="3">
    <location>
        <begin position="946"/>
        <end position="964"/>
    </location>
</feature>
<feature type="compositionally biased region" description="Low complexity" evidence="3">
    <location>
        <begin position="972"/>
        <end position="988"/>
    </location>
</feature>
<feature type="compositionally biased region" description="Pro residues" evidence="3">
    <location>
        <begin position="989"/>
        <end position="1013"/>
    </location>
</feature>
<feature type="compositionally biased region" description="Polar residues" evidence="3">
    <location>
        <begin position="1106"/>
        <end position="1122"/>
    </location>
</feature>
<feature type="compositionally biased region" description="Low complexity" evidence="3">
    <location>
        <begin position="1182"/>
        <end position="1198"/>
    </location>
</feature>
<feature type="compositionally biased region" description="Basic and acidic residues" evidence="3">
    <location>
        <begin position="1212"/>
        <end position="1221"/>
    </location>
</feature>
<feature type="compositionally biased region" description="Acidic residues" evidence="3">
    <location>
        <begin position="1244"/>
        <end position="1275"/>
    </location>
</feature>
<feature type="compositionally biased region" description="Pro residues" evidence="3">
    <location>
        <begin position="1307"/>
        <end position="1324"/>
    </location>
</feature>
<feature type="compositionally biased region" description="Basic and acidic residues" evidence="3">
    <location>
        <begin position="1457"/>
        <end position="1475"/>
    </location>
</feature>
<feature type="compositionally biased region" description="Basic residues" evidence="3">
    <location>
        <begin position="1478"/>
        <end position="1492"/>
    </location>
</feature>
<feature type="compositionally biased region" description="Basic residues" evidence="3">
    <location>
        <begin position="1751"/>
        <end position="1761"/>
    </location>
</feature>
<feature type="compositionally biased region" description="Acidic residues" evidence="3">
    <location>
        <begin position="1868"/>
        <end position="1888"/>
    </location>
</feature>
<feature type="compositionally biased region" description="Low complexity" evidence="3">
    <location>
        <begin position="2348"/>
        <end position="2371"/>
    </location>
</feature>
<feature type="compositionally biased region" description="Acidic residues" evidence="3">
    <location>
        <begin position="2372"/>
        <end position="2383"/>
    </location>
</feature>
<feature type="compositionally biased region" description="Low complexity" evidence="3">
    <location>
        <begin position="2432"/>
        <end position="2442"/>
    </location>
</feature>
<feature type="modified residue" description="N6-acetyllysine" evidence="8">
    <location>
        <position position="222"/>
    </location>
</feature>
<feature type="modified residue" description="Phosphoserine" evidence="9">
    <location>
        <position position="2274"/>
    </location>
</feature>
<feature type="sequence variant" id="VAR_061559" description="In dbSNP:rs12952981.">
    <original>A</original>
    <variation>T</variation>
    <location>
        <position position="272"/>
    </location>
</feature>
<feature type="sequence variant" id="VAR_059589" description="In dbSNP:rs7213444." evidence="4">
    <original>T</original>
    <variation>A</variation>
    <location>
        <position position="1168"/>
    </location>
</feature>
<feature type="sequence variant" id="VAR_061560" description="In dbSNP:rs35572189.">
    <original>R</original>
    <variation>Q</variation>
    <location>
        <position position="1434"/>
    </location>
</feature>
<feature type="sequence variant" id="VAR_061561" description="In dbSNP:rs12601317." evidence="4">
    <original>T</original>
    <variation>A</variation>
    <location>
        <position position="1678"/>
    </location>
</feature>
<feature type="sequence variant" id="VAR_061562" description="In dbSNP:rs34680524.">
    <original>V</original>
    <variation>I</variation>
    <location>
        <position position="2029"/>
    </location>
</feature>
<feature type="sequence variant" id="VAR_050685" description="In dbSNP:rs8746.">
    <original>R</original>
    <variation>C</variation>
    <location>
        <position position="2510"/>
    </location>
</feature>
<sequence>MDGRDFAPPPHLLSERGSLGHRSAAAAARLAPAGPAAQPPAHFQPGKYFPSPLPMASHTASSRLMGSSPASSFMGSFLTSSLGSAASTHPSGPSSSPPEQAYRGSHPTTSQIWFSHSHEAPGYPRFSGSLASTFLPVSHLDHHGNSNVLYGQHRFYGTQKDNFYLRNLPPQPTLLPANHNFPSVARAAPAHPMGSCSRDRDRGEAGSLQKGPKDFDRFLVGKELGREKAGKAAEGKERPAAEEDGGKERHKLVLPVPADGHCREGGPAPRGACEGRPKHLTSCLLNTKVLNGEMGRAALASCAGGMLGRPGTGVVTSGRCAKEAAGPPEPGPAFSECLERRQMLHHTASYAGPPPPLSTAAGSFPCLQLHGGPDGLCPLQDKAPRDLKASGPTFVPSVGHLADKGRPFQAAEACAVAGEGKDRHLEGTMAPDHAAPYGVSYAHLKAEGKGERRPGGFEAALNPRLKGLDYLSSAGPEASFPGLPKSGLDKSGYFELPTSSQDCARPGHQDPLGGKAPQACCTLDKTVGKEAPAGPPGAQKVARIRHQQHLMAAEVEQGGIGAEAKRKSLELASLGYSGPHLPPWGVQAGQGTAMAISEERKAGAYLDPFGSGLQQAALLPQELPAPPDEVSAMKNLLKYSSQALVVGQKAPLVGLGGLKASCIQQEAKFLSSKGPGQSERPDCARSREHDTTHGDGEVRQPPVGIAVALARQKDTVSRSEAAYGTNTARQGRAAPAFKGGGGPRSTHALDLEAEEERTRLCDDRLGLASRELLLQDSKDRVEFARIHPPSSCPGDLAPHLMMQSGQLGGDPAPHTHPHPPWLPRTRSPSLWMGGHSYGLGHPALHQNLPPGFPASVAGPVPSVFPLPQDAPTQLVILPSEPTPHSAPHALADVMDQASLWPPMYGGRGPASHMQHPGQLPVYSRPQLLRQQELYALQQQRAAQFQRKPEDQHLDLEEPAQEKAPKSTHKPVALTPTAPGAPSPAAGPTKLPPCCHPPDPKPPASSPTPPPRPSAPCTLNVCPASSPGPGSRVRSAEEKNGEGQQSTADIITSEPVARAHSVAHAGLEFLASNDPSTSASQSFGITDLPPGYLRPMAGLGFSLPSDVHSSNLEDPETMQTTAPGAQPEPTRTFLPGEPPPCSPRSLEEPGLLSGAREATQDLAATPYPTERGPQGKAADPSPLEGLQELQCAALLEAGGPEATGQAHSTQGGAREERSREEGEQGPSSGASSQVLEQRAGSPGALEDEGEQPAPEEDELEEDELGQQSMEDSEEDCGGAPDNSHPPRALPGLDALVAATINLGDLPSDSPPDPQPPAASGPPSTVPLPHSSGIHGIALLSELADLAIQRQRSERTVPEEEEDVLAFNLQHLATLATAWSLVEAAGLDSSTAPAQPPTANPCSGPRLTPRMQILQRKDTWTPKTKPVCPLKAAIDRLDTQEVGMRVRLAELQRRYKEKQRELARLQRKHDHERDESSRSPARRGPGRPRKRKHSSSLPAPRPTGPLPRSDGKKVKAVRTSLGLLCAELRGGSGGEPAKKRSKLERSVYAGLQTASVEKAQCKKSSCQGGLAPSVAHRVAQLKPKVKSKGLPTGLSSFQQKEATPGGRIREKLSRAKSAKVSGATRHPQPKGHGSRETPRCPAQPSVAASQEAGSGYDSEDCEGLLGTEAPPREAGLLLHTGASVAVLGPSPSSVVKMEANQKAKKKKERQGLLGACRLSSPESEVKIKRRSVKAKVGTTLERAPGQRPPGALGKKKAKGKAKGSLRAEPGATPSRDALFNPSRAFACREEGSQLASERLKRATRKGTVLQPVLRRKNGALSITLATRNAKAILGKGRKLSKVKHKAGKQGKGRAVSRLLESFAVEEDFEFDDNSSFSEEEEDEEEEEEDSGPLSAEQSAALARSCAIHKEDLRDGLPVLIPKEDSLLYAGSVRTLQPPDIYSIVIEGERGNRQRIYSLEQLLQEAVLDVRPQSSRYLPPGTRVCAYWSQKSRCLYPGNVVRGASGDEDEDLDSVVVEFDDGDTGHIAVSNVRLLPPDFKIQCTEPSPALLVSSSCRRTKKVSSEAPPPSEAATPSLSPKAQDGPEALKTPGKKSISKDKAGKAELLTSGAKSPTGASDHFLGRRGSPLLSWSAVAQTKRKAVAAASKGPGVLQNLFQLNGSSKKLRAREALFPVHSVATPIFGNGFRADSFSSLASSYAPFVGGTGPGLPRGAHKLLRAKKAERVEAEKGGRRRAGGEFLVKLDHEGVTSPKNKTCKALLMGDKDFSPKLGRPLPSPSYVHPALVGKDKKGRAPIPPLPMGLALRKYAGQAEFPLPYDSDCHSSFSDEDEDGPGLAAGVPSRFLARLSVSSSSSGSSTSSSSGSVSTSSLCSSDNEDSSYSSDDEDPALLLQTCLTHPVPTLLAQPEALRSKGSGPHAHAQRCFLSRATVAGTGAGSGPSSSSKSKLKRKEALSFSKAKELSRRQRPPSVENRPKISAFLPARQLWKWSGNPTQRRGMKGKARKLFYKAIVRGEETLRVGDCAVFLSAGRPNLPYIGRIESMWESWGSNMVVKVKWFYHPEETKLGKRQCDGKNALYQSCHEDENDVQTISHKCQVVAREQYEQMARSRKCQDRQDLYYLAGTYDPTTGRLVTADGVPILC</sequence>
<evidence type="ECO:0000255" key="1"/>
<evidence type="ECO:0000255" key="2">
    <source>
        <dbReference type="PROSITE-ProRule" id="PRU00370"/>
    </source>
</evidence>
<evidence type="ECO:0000256" key="3">
    <source>
        <dbReference type="SAM" id="MobiDB-lite"/>
    </source>
</evidence>
<evidence type="ECO:0000269" key="4">
    <source>
    </source>
</evidence>
<evidence type="ECO:0000303" key="5">
    <source>
    </source>
</evidence>
<evidence type="ECO:0000305" key="6"/>
<evidence type="ECO:0000312" key="7">
    <source>
        <dbReference type="HGNC" id="HGNC:29279"/>
    </source>
</evidence>
<evidence type="ECO:0007744" key="8">
    <source>
    </source>
</evidence>
<evidence type="ECO:0007744" key="9">
    <source>
    </source>
</evidence>
<dbReference type="EMBL" id="AC110285">
    <property type="status" value="NOT_ANNOTATED_CDS"/>
    <property type="molecule type" value="Genomic_DNA"/>
</dbReference>
<dbReference type="EMBL" id="AC139149">
    <property type="status" value="NOT_ANNOTATED_CDS"/>
    <property type="molecule type" value="Genomic_DNA"/>
</dbReference>
<dbReference type="EMBL" id="AC213194">
    <property type="status" value="NOT_ANNOTATED_CDS"/>
    <property type="molecule type" value="Genomic_DNA"/>
</dbReference>
<dbReference type="EMBL" id="AADB02019016">
    <property type="status" value="NOT_ANNOTATED_CDS"/>
    <property type="molecule type" value="Genomic_DNA"/>
</dbReference>
<dbReference type="EMBL" id="AB040880">
    <property type="protein sequence ID" value="BAA95971.1"/>
    <property type="molecule type" value="mRNA"/>
</dbReference>
<dbReference type="EMBL" id="BC033222">
    <property type="protein sequence ID" value="AAH33222.1"/>
    <property type="molecule type" value="mRNA"/>
</dbReference>
<dbReference type="CCDS" id="CCDS92415.1"/>
<dbReference type="RefSeq" id="NP_001278253.1">
    <property type="nucleotide sequence ID" value="NM_001291324.3"/>
</dbReference>
<dbReference type="RefSeq" id="XP_047292422.1">
    <property type="nucleotide sequence ID" value="XM_047436466.1"/>
</dbReference>
<dbReference type="SMR" id="Q9P281"/>
<dbReference type="BioGRID" id="121648">
    <property type="interactions" value="36"/>
</dbReference>
<dbReference type="FunCoup" id="Q9P281">
    <property type="interactions" value="611"/>
</dbReference>
<dbReference type="IntAct" id="Q9P281">
    <property type="interactions" value="21"/>
</dbReference>
<dbReference type="STRING" id="9606.ENSP00000462154"/>
<dbReference type="GlyGen" id="Q9P281">
    <property type="glycosylation" value="4 sites, 1 O-linked glycan (1 site)"/>
</dbReference>
<dbReference type="iPTMnet" id="Q9P281"/>
<dbReference type="PhosphoSitePlus" id="Q9P281"/>
<dbReference type="BioMuta" id="BAHCC1"/>
<dbReference type="DMDM" id="205371795"/>
<dbReference type="jPOST" id="Q9P281"/>
<dbReference type="MassIVE" id="Q9P281"/>
<dbReference type="PaxDb" id="9606-ENSP00000462154"/>
<dbReference type="PeptideAtlas" id="Q9P281"/>
<dbReference type="ProteomicsDB" id="83747"/>
<dbReference type="Pumba" id="Q9P281"/>
<dbReference type="Antibodypedia" id="75308">
    <property type="antibodies" value="11 antibodies from 6 providers"/>
</dbReference>
<dbReference type="Ensembl" id="ENST00000584436.7">
    <property type="protein sequence ID" value="ENSP00000462154.4"/>
    <property type="gene ID" value="ENSG00000266074.11"/>
</dbReference>
<dbReference type="GeneID" id="57597"/>
<dbReference type="KEGG" id="hsa:57597"/>
<dbReference type="AGR" id="HGNC:29279"/>
<dbReference type="CTD" id="57597"/>
<dbReference type="DisGeNET" id="57597"/>
<dbReference type="GeneCards" id="BAHCC1"/>
<dbReference type="HGNC" id="HGNC:29279">
    <property type="gene designation" value="BAHCC1"/>
</dbReference>
<dbReference type="HPA" id="ENSG00000266074">
    <property type="expression patterns" value="Tissue enhanced (brain)"/>
</dbReference>
<dbReference type="MIM" id="617646">
    <property type="type" value="gene"/>
</dbReference>
<dbReference type="neXtProt" id="NX_Q9P281"/>
<dbReference type="OpenTargets" id="ENSG00000266074"/>
<dbReference type="PharmGKB" id="PA128394719"/>
<dbReference type="VEuPathDB" id="HostDB:ENSG00000266074"/>
<dbReference type="eggNOG" id="KOG1886">
    <property type="taxonomic scope" value="Eukaryota"/>
</dbReference>
<dbReference type="GeneTree" id="ENSGT00940000160116"/>
<dbReference type="InParanoid" id="Q9P281"/>
<dbReference type="OrthoDB" id="6426227at2759"/>
<dbReference type="PAN-GO" id="Q9P281">
    <property type="GO annotations" value="0 GO annotations based on evolutionary models"/>
</dbReference>
<dbReference type="PhylomeDB" id="Q9P281"/>
<dbReference type="PathwayCommons" id="Q9P281"/>
<dbReference type="SignaLink" id="Q9P281"/>
<dbReference type="BioGRID-ORCS" id="57597">
    <property type="hits" value="11 hits in 286 CRISPR screens"/>
</dbReference>
<dbReference type="ChiTaRS" id="BAHCC1">
    <property type="organism name" value="human"/>
</dbReference>
<dbReference type="GenomeRNAi" id="57597"/>
<dbReference type="Pharos" id="Q9P281">
    <property type="development level" value="Tdark"/>
</dbReference>
<dbReference type="PRO" id="PR:Q9P281"/>
<dbReference type="Proteomes" id="UP000005640">
    <property type="component" value="Chromosome 17"/>
</dbReference>
<dbReference type="RNAct" id="Q9P281">
    <property type="molecule type" value="protein"/>
</dbReference>
<dbReference type="Bgee" id="ENSG00000266074">
    <property type="expression patterns" value="Expressed in right hemisphere of cerebellum and 112 other cell types or tissues"/>
</dbReference>
<dbReference type="ExpressionAtlas" id="Q9P281">
    <property type="expression patterns" value="baseline and differential"/>
</dbReference>
<dbReference type="GO" id="GO:0003682">
    <property type="term" value="F:chromatin binding"/>
    <property type="evidence" value="ECO:0007669"/>
    <property type="project" value="InterPro"/>
</dbReference>
<dbReference type="CDD" id="cd04714">
    <property type="entry name" value="BAH_BAHCC1"/>
    <property type="match status" value="1"/>
</dbReference>
<dbReference type="CDD" id="cd20470">
    <property type="entry name" value="Tudor_BAHCC1"/>
    <property type="match status" value="1"/>
</dbReference>
<dbReference type="Gene3D" id="2.30.30.140">
    <property type="match status" value="1"/>
</dbReference>
<dbReference type="Gene3D" id="2.30.30.490">
    <property type="match status" value="1"/>
</dbReference>
<dbReference type="InterPro" id="IPR001025">
    <property type="entry name" value="BAH_dom"/>
</dbReference>
<dbReference type="InterPro" id="IPR052429">
    <property type="entry name" value="BAH_domain_protein"/>
</dbReference>
<dbReference type="InterPro" id="IPR043151">
    <property type="entry name" value="BAH_sf"/>
</dbReference>
<dbReference type="InterPro" id="IPR048924">
    <property type="entry name" value="BAHCC1-like_Tudor"/>
</dbReference>
<dbReference type="InterPro" id="IPR056841">
    <property type="entry name" value="TNRC18_BAHCC1-like_SH3"/>
</dbReference>
<dbReference type="InterPro" id="IPR047411">
    <property type="entry name" value="Tudor_BAHCC1"/>
</dbReference>
<dbReference type="PANTHER" id="PTHR12505:SF22">
    <property type="entry name" value="BAH AND COILED-COIL DOMAIN-CONTAINING PROTEIN 1"/>
    <property type="match status" value="1"/>
</dbReference>
<dbReference type="PANTHER" id="PTHR12505">
    <property type="entry name" value="PHD FINGER TRANSCRIPTION FACTOR"/>
    <property type="match status" value="1"/>
</dbReference>
<dbReference type="Pfam" id="PF01426">
    <property type="entry name" value="BAH"/>
    <property type="match status" value="1"/>
</dbReference>
<dbReference type="Pfam" id="PF21744">
    <property type="entry name" value="BAHCC1-like_Tudor"/>
    <property type="match status" value="1"/>
</dbReference>
<dbReference type="Pfam" id="PF24912">
    <property type="entry name" value="SH3_TNRC18"/>
    <property type="match status" value="1"/>
</dbReference>
<dbReference type="SMART" id="SM00439">
    <property type="entry name" value="BAH"/>
    <property type="match status" value="1"/>
</dbReference>
<dbReference type="PROSITE" id="PS51038">
    <property type="entry name" value="BAH"/>
    <property type="match status" value="1"/>
</dbReference>